<reference key="1">
    <citation type="journal article" date="2007" name="Proc. Natl. Acad. Sci. U.S.A.">
        <title>Dandruff-associated Malassezia genomes reveal convergent and divergent virulence traits shared with plant and human fungal pathogens.</title>
        <authorList>
            <person name="Xu J."/>
            <person name="Saunders C.W."/>
            <person name="Hu P."/>
            <person name="Grant R.A."/>
            <person name="Boekhout T."/>
            <person name="Kuramae E.E."/>
            <person name="Kronstad J.W."/>
            <person name="DeAngelis Y.M."/>
            <person name="Reeder N.L."/>
            <person name="Johnstone K.R."/>
            <person name="Leland M."/>
            <person name="Fieno A.M."/>
            <person name="Begley W.M."/>
            <person name="Sun Y."/>
            <person name="Lacey M.P."/>
            <person name="Chaudhary T."/>
            <person name="Keough T."/>
            <person name="Chu L."/>
            <person name="Sears R."/>
            <person name="Yuan B."/>
            <person name="Dawson T.L. Jr."/>
        </authorList>
    </citation>
    <scope>NUCLEOTIDE SEQUENCE [LARGE SCALE GENOMIC DNA]</scope>
    <source>
        <strain>ATCC MYA-4612 / CBS 7966</strain>
    </source>
</reference>
<dbReference type="EC" id="6.3.4.4" evidence="2"/>
<dbReference type="EMBL" id="AAYY01000006">
    <property type="protein sequence ID" value="EDP43807.1"/>
    <property type="molecule type" value="Genomic_DNA"/>
</dbReference>
<dbReference type="RefSeq" id="XP_001731021.1">
    <property type="nucleotide sequence ID" value="XM_001730969.1"/>
</dbReference>
<dbReference type="SMR" id="A8Q0E3"/>
<dbReference type="FunCoup" id="A8Q0E3">
    <property type="interactions" value="478"/>
</dbReference>
<dbReference type="STRING" id="425265.A8Q0E3"/>
<dbReference type="GeneID" id="5855328"/>
<dbReference type="KEGG" id="mgl:MGL_2020"/>
<dbReference type="VEuPathDB" id="FungiDB:MGL_2020"/>
<dbReference type="InParanoid" id="A8Q0E3"/>
<dbReference type="OMA" id="FHHAKPI"/>
<dbReference type="OrthoDB" id="10265645at2759"/>
<dbReference type="UniPathway" id="UPA00075">
    <property type="reaction ID" value="UER00335"/>
</dbReference>
<dbReference type="Proteomes" id="UP000008837">
    <property type="component" value="Unassembled WGS sequence"/>
</dbReference>
<dbReference type="GO" id="GO:0005737">
    <property type="term" value="C:cytoplasm"/>
    <property type="evidence" value="ECO:0007669"/>
    <property type="project" value="UniProtKB-SubCell"/>
</dbReference>
<dbReference type="GO" id="GO:0004019">
    <property type="term" value="F:adenylosuccinate synthase activity"/>
    <property type="evidence" value="ECO:0007669"/>
    <property type="project" value="UniProtKB-UniRule"/>
</dbReference>
<dbReference type="GO" id="GO:0005525">
    <property type="term" value="F:GTP binding"/>
    <property type="evidence" value="ECO:0007669"/>
    <property type="project" value="UniProtKB-UniRule"/>
</dbReference>
<dbReference type="GO" id="GO:0000287">
    <property type="term" value="F:magnesium ion binding"/>
    <property type="evidence" value="ECO:0007669"/>
    <property type="project" value="UniProtKB-UniRule"/>
</dbReference>
<dbReference type="GO" id="GO:0044208">
    <property type="term" value="P:'de novo' AMP biosynthetic process"/>
    <property type="evidence" value="ECO:0007669"/>
    <property type="project" value="UniProtKB-UniRule"/>
</dbReference>
<dbReference type="GO" id="GO:0046040">
    <property type="term" value="P:IMP metabolic process"/>
    <property type="evidence" value="ECO:0007669"/>
    <property type="project" value="TreeGrafter"/>
</dbReference>
<dbReference type="CDD" id="cd03108">
    <property type="entry name" value="AdSS"/>
    <property type="match status" value="1"/>
</dbReference>
<dbReference type="FunFam" id="3.90.170.10:FF:000001">
    <property type="entry name" value="Adenylosuccinate synthetase"/>
    <property type="match status" value="1"/>
</dbReference>
<dbReference type="FunFam" id="1.10.300.10:FF:000002">
    <property type="entry name" value="Adenylosuccinate synthetase, chloroplastic"/>
    <property type="match status" value="1"/>
</dbReference>
<dbReference type="Gene3D" id="3.40.440.10">
    <property type="entry name" value="Adenylosuccinate Synthetase, subunit A, domain 1"/>
    <property type="match status" value="1"/>
</dbReference>
<dbReference type="Gene3D" id="1.10.300.10">
    <property type="entry name" value="Adenylosuccinate Synthetase, subunit A, domain 2"/>
    <property type="match status" value="1"/>
</dbReference>
<dbReference type="Gene3D" id="3.90.170.10">
    <property type="entry name" value="Adenylosuccinate Synthetase, subunit A, domain 3"/>
    <property type="match status" value="1"/>
</dbReference>
<dbReference type="HAMAP" id="MF_00011">
    <property type="entry name" value="Adenylosucc_synth"/>
    <property type="match status" value="1"/>
</dbReference>
<dbReference type="InterPro" id="IPR018220">
    <property type="entry name" value="Adenylosuccin_syn_GTP-bd"/>
</dbReference>
<dbReference type="InterPro" id="IPR033128">
    <property type="entry name" value="Adenylosuccin_syn_Lys_AS"/>
</dbReference>
<dbReference type="InterPro" id="IPR042109">
    <property type="entry name" value="Adenylosuccinate_synth_dom1"/>
</dbReference>
<dbReference type="InterPro" id="IPR042110">
    <property type="entry name" value="Adenylosuccinate_synth_dom2"/>
</dbReference>
<dbReference type="InterPro" id="IPR042111">
    <property type="entry name" value="Adenylosuccinate_synth_dom3"/>
</dbReference>
<dbReference type="InterPro" id="IPR001114">
    <property type="entry name" value="Adenylosuccinate_synthetase"/>
</dbReference>
<dbReference type="InterPro" id="IPR027417">
    <property type="entry name" value="P-loop_NTPase"/>
</dbReference>
<dbReference type="NCBIfam" id="NF002223">
    <property type="entry name" value="PRK01117.1"/>
    <property type="match status" value="1"/>
</dbReference>
<dbReference type="NCBIfam" id="TIGR00184">
    <property type="entry name" value="purA"/>
    <property type="match status" value="1"/>
</dbReference>
<dbReference type="PANTHER" id="PTHR11846">
    <property type="entry name" value="ADENYLOSUCCINATE SYNTHETASE"/>
    <property type="match status" value="1"/>
</dbReference>
<dbReference type="PANTHER" id="PTHR11846:SF0">
    <property type="entry name" value="ADENYLOSUCCINATE SYNTHETASE"/>
    <property type="match status" value="1"/>
</dbReference>
<dbReference type="Pfam" id="PF00709">
    <property type="entry name" value="Adenylsucc_synt"/>
    <property type="match status" value="1"/>
</dbReference>
<dbReference type="SMART" id="SM00788">
    <property type="entry name" value="Adenylsucc_synt"/>
    <property type="match status" value="1"/>
</dbReference>
<dbReference type="SUPFAM" id="SSF52540">
    <property type="entry name" value="P-loop containing nucleoside triphosphate hydrolases"/>
    <property type="match status" value="1"/>
</dbReference>
<dbReference type="PROSITE" id="PS01266">
    <property type="entry name" value="ADENYLOSUCCIN_SYN_1"/>
    <property type="match status" value="1"/>
</dbReference>
<dbReference type="PROSITE" id="PS00513">
    <property type="entry name" value="ADENYLOSUCCIN_SYN_2"/>
    <property type="match status" value="1"/>
</dbReference>
<comment type="function">
    <text evidence="1">Plays an important role in the de novo pathway and in the salvage pathway of purine nucleotide biosynthesis. Catalyzes the first committed step in the biosynthesis of AMP from IMP (By similarity).</text>
</comment>
<comment type="catalytic activity">
    <reaction evidence="2">
        <text>IMP + L-aspartate + GTP = N(6)-(1,2-dicarboxyethyl)-AMP + GDP + phosphate + 2 H(+)</text>
        <dbReference type="Rhea" id="RHEA:15753"/>
        <dbReference type="ChEBI" id="CHEBI:15378"/>
        <dbReference type="ChEBI" id="CHEBI:29991"/>
        <dbReference type="ChEBI" id="CHEBI:37565"/>
        <dbReference type="ChEBI" id="CHEBI:43474"/>
        <dbReference type="ChEBI" id="CHEBI:57567"/>
        <dbReference type="ChEBI" id="CHEBI:58053"/>
        <dbReference type="ChEBI" id="CHEBI:58189"/>
        <dbReference type="EC" id="6.3.4.4"/>
    </reaction>
</comment>
<comment type="cofactor">
    <cofactor evidence="2">
        <name>Mg(2+)</name>
        <dbReference type="ChEBI" id="CHEBI:18420"/>
    </cofactor>
    <text evidence="2">Binds 1 Mg(2+) ion per subunit.</text>
</comment>
<comment type="pathway">
    <text evidence="2">Purine metabolism; AMP biosynthesis via de novo pathway; AMP from IMP: step 1/2.</text>
</comment>
<comment type="subunit">
    <text evidence="2">Homodimer.</text>
</comment>
<comment type="subcellular location">
    <subcellularLocation>
        <location evidence="2">Cytoplasm</location>
    </subcellularLocation>
</comment>
<comment type="similarity">
    <text evidence="2">Belongs to the adenylosuccinate synthetase family.</text>
</comment>
<evidence type="ECO:0000250" key="1"/>
<evidence type="ECO:0000255" key="2">
    <source>
        <dbReference type="HAMAP-Rule" id="MF_03125"/>
    </source>
</evidence>
<feature type="chain" id="PRO_0000399343" description="Adenylosuccinate synthetase">
    <location>
        <begin position="1"/>
        <end position="445"/>
    </location>
</feature>
<feature type="active site" description="Proton acceptor" evidence="2">
    <location>
        <position position="25"/>
    </location>
</feature>
<feature type="active site" description="Proton donor" evidence="2">
    <location>
        <position position="53"/>
    </location>
</feature>
<feature type="binding site" evidence="2">
    <location>
        <begin position="24"/>
        <end position="30"/>
    </location>
    <ligand>
        <name>GTP</name>
        <dbReference type="ChEBI" id="CHEBI:37565"/>
    </ligand>
</feature>
<feature type="binding site" description="in other chain" evidence="2">
    <location>
        <begin position="25"/>
        <end position="28"/>
    </location>
    <ligand>
        <name>IMP</name>
        <dbReference type="ChEBI" id="CHEBI:58053"/>
        <note>ligand shared between dimeric partners</note>
    </ligand>
</feature>
<feature type="binding site" evidence="2">
    <location>
        <position position="25"/>
    </location>
    <ligand>
        <name>Mg(2+)</name>
        <dbReference type="ChEBI" id="CHEBI:18420"/>
    </ligand>
</feature>
<feature type="binding site" description="in other chain" evidence="2">
    <location>
        <begin position="50"/>
        <end position="53"/>
    </location>
    <ligand>
        <name>IMP</name>
        <dbReference type="ChEBI" id="CHEBI:58053"/>
        <note>ligand shared between dimeric partners</note>
    </ligand>
</feature>
<feature type="binding site" evidence="2">
    <location>
        <begin position="52"/>
        <end position="54"/>
    </location>
    <ligand>
        <name>GTP</name>
        <dbReference type="ChEBI" id="CHEBI:37565"/>
    </ligand>
</feature>
<feature type="binding site" evidence="2">
    <location>
        <position position="52"/>
    </location>
    <ligand>
        <name>Mg(2+)</name>
        <dbReference type="ChEBI" id="CHEBI:18420"/>
    </ligand>
</feature>
<feature type="binding site" description="in other chain" evidence="2">
    <location>
        <position position="147"/>
    </location>
    <ligand>
        <name>IMP</name>
        <dbReference type="ChEBI" id="CHEBI:58053"/>
        <note>ligand shared between dimeric partners</note>
    </ligand>
</feature>
<feature type="binding site" evidence="2">
    <location>
        <position position="161"/>
    </location>
    <ligand>
        <name>IMP</name>
        <dbReference type="ChEBI" id="CHEBI:58053"/>
        <note>ligand shared between dimeric partners</note>
    </ligand>
</feature>
<feature type="binding site" description="in other chain" evidence="2">
    <location>
        <position position="238"/>
    </location>
    <ligand>
        <name>IMP</name>
        <dbReference type="ChEBI" id="CHEBI:58053"/>
        <note>ligand shared between dimeric partners</note>
    </ligand>
</feature>
<feature type="binding site" description="in other chain" evidence="2">
    <location>
        <position position="253"/>
    </location>
    <ligand>
        <name>IMP</name>
        <dbReference type="ChEBI" id="CHEBI:58053"/>
        <note>ligand shared between dimeric partners</note>
    </ligand>
</feature>
<feature type="binding site" evidence="2">
    <location>
        <begin position="313"/>
        <end position="319"/>
    </location>
    <ligand>
        <name>substrate</name>
    </ligand>
</feature>
<feature type="binding site" description="in other chain" evidence="2">
    <location>
        <position position="317"/>
    </location>
    <ligand>
        <name>IMP</name>
        <dbReference type="ChEBI" id="CHEBI:58053"/>
        <note>ligand shared between dimeric partners</note>
    </ligand>
</feature>
<feature type="binding site" evidence="2">
    <location>
        <position position="319"/>
    </location>
    <ligand>
        <name>GTP</name>
        <dbReference type="ChEBI" id="CHEBI:37565"/>
    </ligand>
</feature>
<feature type="binding site" evidence="2">
    <location>
        <begin position="345"/>
        <end position="347"/>
    </location>
    <ligand>
        <name>GTP</name>
        <dbReference type="ChEBI" id="CHEBI:37565"/>
    </ligand>
</feature>
<feature type="binding site" evidence="2">
    <location>
        <begin position="427"/>
        <end position="429"/>
    </location>
    <ligand>
        <name>GTP</name>
        <dbReference type="ChEBI" id="CHEBI:37565"/>
    </ligand>
</feature>
<organism>
    <name type="scientific">Malassezia globosa (strain ATCC MYA-4612 / CBS 7966)</name>
    <name type="common">Dandruff-associated fungus</name>
    <dbReference type="NCBI Taxonomy" id="425265"/>
    <lineage>
        <taxon>Eukaryota</taxon>
        <taxon>Fungi</taxon>
        <taxon>Dikarya</taxon>
        <taxon>Basidiomycota</taxon>
        <taxon>Ustilaginomycotina</taxon>
        <taxon>Malasseziomycetes</taxon>
        <taxon>Malasseziales</taxon>
        <taxon>Malasseziaceae</taxon>
        <taxon>Malassezia</taxon>
    </lineage>
</organism>
<sequence length="445" mass="48982">MASMPKPNQSARGRVTVVLGSQWGDEGKGKLTDMLAGEMDICARCAGGNNAGHTIVANSGPDNVKTKFDFHLLPSGLVNPKCIGFIGSGVVMHVPSFFSELDTIEKKGLKCDNRLFVSDRTHLVFDFHQVVDGLKEVELGGSSIGTTKKGIGPAYSSKASRSGLRVHHLYDFDTFAAKFRKLVEGRFKRYGNFEYDTEGEIARYRAFAERLRPFVVDGVTFIHSMLSSNRRVLVEGANALMLDLDYGTYPFVTSSSTGIGGVCTGLGIPPQCIGGVIGVMKAYTSRVGAGPFPTELNDEIMTHLQEVGAEYGTTTGRRRRCGWLDLVMMRYSCLINGYTCLNLTKLDVLDNLPEIKVATTYMLGDKELSSFPADLNILAKVDVQYKTFKGWRGPISNCTSYEQLPDTCREYIEFIENFLGVHIEWIGVGPGREAMVHRPLPPHEM</sequence>
<accession>A8Q0E3</accession>
<name>PURA_MALGO</name>
<proteinExistence type="inferred from homology"/>
<gene>
    <name type="ORF">MGL_2020</name>
</gene>
<protein>
    <recommendedName>
        <fullName evidence="2">Adenylosuccinate synthetase</fullName>
        <shortName evidence="2">AMPSase</shortName>
        <shortName evidence="2">AdSS</shortName>
        <ecNumber evidence="2">6.3.4.4</ecNumber>
    </recommendedName>
    <alternativeName>
        <fullName evidence="2">IMP--aspartate ligase</fullName>
    </alternativeName>
</protein>
<keyword id="KW-0963">Cytoplasm</keyword>
<keyword id="KW-0342">GTP-binding</keyword>
<keyword id="KW-0436">Ligase</keyword>
<keyword id="KW-0460">Magnesium</keyword>
<keyword id="KW-0479">Metal-binding</keyword>
<keyword id="KW-0547">Nucleotide-binding</keyword>
<keyword id="KW-0658">Purine biosynthesis</keyword>
<keyword id="KW-1185">Reference proteome</keyword>